<reference key="1">
    <citation type="journal article" date="2001" name="Nature">
        <title>Genome sequence of enterohaemorrhagic Escherichia coli O157:H7.</title>
        <authorList>
            <person name="Perna N.T."/>
            <person name="Plunkett G. III"/>
            <person name="Burland V."/>
            <person name="Mau B."/>
            <person name="Glasner J.D."/>
            <person name="Rose D.J."/>
            <person name="Mayhew G.F."/>
            <person name="Evans P.S."/>
            <person name="Gregor J."/>
            <person name="Kirkpatrick H.A."/>
            <person name="Posfai G."/>
            <person name="Hackett J."/>
            <person name="Klink S."/>
            <person name="Boutin A."/>
            <person name="Shao Y."/>
            <person name="Miller L."/>
            <person name="Grotbeck E.J."/>
            <person name="Davis N.W."/>
            <person name="Lim A."/>
            <person name="Dimalanta E.T."/>
            <person name="Potamousis K."/>
            <person name="Apodaca J."/>
            <person name="Anantharaman T.S."/>
            <person name="Lin J."/>
            <person name="Yen G."/>
            <person name="Schwartz D.C."/>
            <person name="Welch R.A."/>
            <person name="Blattner F.R."/>
        </authorList>
    </citation>
    <scope>NUCLEOTIDE SEQUENCE [LARGE SCALE GENOMIC DNA]</scope>
    <source>
        <strain>O157:H7 / EDL933 / ATCC 700927 / EHEC</strain>
    </source>
</reference>
<reference key="2">
    <citation type="journal article" date="2001" name="DNA Res.">
        <title>Complete genome sequence of enterohemorrhagic Escherichia coli O157:H7 and genomic comparison with a laboratory strain K-12.</title>
        <authorList>
            <person name="Hayashi T."/>
            <person name="Makino K."/>
            <person name="Ohnishi M."/>
            <person name="Kurokawa K."/>
            <person name="Ishii K."/>
            <person name="Yokoyama K."/>
            <person name="Han C.-G."/>
            <person name="Ohtsubo E."/>
            <person name="Nakayama K."/>
            <person name="Murata T."/>
            <person name="Tanaka M."/>
            <person name="Tobe T."/>
            <person name="Iida T."/>
            <person name="Takami H."/>
            <person name="Honda T."/>
            <person name="Sasakawa C."/>
            <person name="Ogasawara N."/>
            <person name="Yasunaga T."/>
            <person name="Kuhara S."/>
            <person name="Shiba T."/>
            <person name="Hattori M."/>
            <person name="Shinagawa H."/>
        </authorList>
    </citation>
    <scope>NUCLEOTIDE SEQUENCE [LARGE SCALE GENOMIC DNA]</scope>
    <source>
        <strain>O157:H7 / Sakai / RIMD 0509952 / EHEC</strain>
    </source>
</reference>
<feature type="chain" id="PRO_0000157012" description="Thiamine-phosphate synthase">
    <location>
        <begin position="1"/>
        <end position="211"/>
    </location>
</feature>
<feature type="binding site" evidence="1">
    <location>
        <begin position="37"/>
        <end position="41"/>
    </location>
    <ligand>
        <name>4-amino-2-methyl-5-(diphosphooxymethyl)pyrimidine</name>
        <dbReference type="ChEBI" id="CHEBI:57841"/>
    </ligand>
</feature>
<feature type="binding site" evidence="1">
    <location>
        <position position="69"/>
    </location>
    <ligand>
        <name>4-amino-2-methyl-5-(diphosphooxymethyl)pyrimidine</name>
        <dbReference type="ChEBI" id="CHEBI:57841"/>
    </ligand>
</feature>
<feature type="binding site" evidence="1">
    <location>
        <position position="70"/>
    </location>
    <ligand>
        <name>Mg(2+)</name>
        <dbReference type="ChEBI" id="CHEBI:18420"/>
    </ligand>
</feature>
<feature type="binding site" evidence="1">
    <location>
        <position position="89"/>
    </location>
    <ligand>
        <name>Mg(2+)</name>
        <dbReference type="ChEBI" id="CHEBI:18420"/>
    </ligand>
</feature>
<feature type="binding site" evidence="1">
    <location>
        <position position="108"/>
    </location>
    <ligand>
        <name>4-amino-2-methyl-5-(diphosphooxymethyl)pyrimidine</name>
        <dbReference type="ChEBI" id="CHEBI:57841"/>
    </ligand>
</feature>
<feature type="binding site" evidence="1">
    <location>
        <begin position="134"/>
        <end position="136"/>
    </location>
    <ligand>
        <name>2-[(2R,5Z)-2-carboxy-4-methylthiazol-5(2H)-ylidene]ethyl phosphate</name>
        <dbReference type="ChEBI" id="CHEBI:62899"/>
    </ligand>
</feature>
<feature type="binding site" evidence="1">
    <location>
        <position position="137"/>
    </location>
    <ligand>
        <name>4-amino-2-methyl-5-(diphosphooxymethyl)pyrimidine</name>
        <dbReference type="ChEBI" id="CHEBI:57841"/>
    </ligand>
</feature>
<feature type="binding site" evidence="1">
    <location>
        <position position="166"/>
    </location>
    <ligand>
        <name>2-[(2R,5Z)-2-carboxy-4-methylthiazol-5(2H)-ylidene]ethyl phosphate</name>
        <dbReference type="ChEBI" id="CHEBI:62899"/>
    </ligand>
</feature>
<feature type="binding site" evidence="1">
    <location>
        <begin position="186"/>
        <end position="187"/>
    </location>
    <ligand>
        <name>2-[(2R,5Z)-2-carboxy-4-methylthiazol-5(2H)-ylidene]ethyl phosphate</name>
        <dbReference type="ChEBI" id="CHEBI:62899"/>
    </ligand>
</feature>
<gene>
    <name evidence="1" type="primary">thiE</name>
    <name type="ordered locus">Z5568</name>
    <name type="ordered locus">ECs4916</name>
</gene>
<proteinExistence type="inferred from homology"/>
<keyword id="KW-0460">Magnesium</keyword>
<keyword id="KW-0479">Metal-binding</keyword>
<keyword id="KW-1185">Reference proteome</keyword>
<keyword id="KW-0784">Thiamine biosynthesis</keyword>
<keyword id="KW-0808">Transferase</keyword>
<dbReference type="EC" id="2.5.1.3" evidence="1"/>
<dbReference type="EMBL" id="AE005174">
    <property type="protein sequence ID" value="AAG59190.1"/>
    <property type="molecule type" value="Genomic_DNA"/>
</dbReference>
<dbReference type="EMBL" id="BA000007">
    <property type="protein sequence ID" value="BAB38339.1"/>
    <property type="molecule type" value="Genomic_DNA"/>
</dbReference>
<dbReference type="PIR" id="B86091">
    <property type="entry name" value="B86091"/>
</dbReference>
<dbReference type="PIR" id="D91243">
    <property type="entry name" value="D91243"/>
</dbReference>
<dbReference type="RefSeq" id="NP_312943.1">
    <property type="nucleotide sequence ID" value="NC_002695.1"/>
</dbReference>
<dbReference type="RefSeq" id="WP_000284602.1">
    <property type="nucleotide sequence ID" value="NZ_VOAI01000037.1"/>
</dbReference>
<dbReference type="SMR" id="Q8X6Y0"/>
<dbReference type="STRING" id="155864.Z5568"/>
<dbReference type="GeneID" id="914936"/>
<dbReference type="KEGG" id="ece:Z5568"/>
<dbReference type="KEGG" id="ecs:ECs_4916"/>
<dbReference type="PATRIC" id="fig|386585.9.peg.5141"/>
<dbReference type="eggNOG" id="COG0352">
    <property type="taxonomic scope" value="Bacteria"/>
</dbReference>
<dbReference type="HOGENOM" id="CLU_018272_3_3_6"/>
<dbReference type="OMA" id="QDFYHIK"/>
<dbReference type="UniPathway" id="UPA00060">
    <property type="reaction ID" value="UER00141"/>
</dbReference>
<dbReference type="Proteomes" id="UP000000558">
    <property type="component" value="Chromosome"/>
</dbReference>
<dbReference type="Proteomes" id="UP000002519">
    <property type="component" value="Chromosome"/>
</dbReference>
<dbReference type="GO" id="GO:0005737">
    <property type="term" value="C:cytoplasm"/>
    <property type="evidence" value="ECO:0007669"/>
    <property type="project" value="TreeGrafter"/>
</dbReference>
<dbReference type="GO" id="GO:0000287">
    <property type="term" value="F:magnesium ion binding"/>
    <property type="evidence" value="ECO:0007669"/>
    <property type="project" value="UniProtKB-UniRule"/>
</dbReference>
<dbReference type="GO" id="GO:0004789">
    <property type="term" value="F:thiamine-phosphate diphosphorylase activity"/>
    <property type="evidence" value="ECO:0007669"/>
    <property type="project" value="UniProtKB-UniRule"/>
</dbReference>
<dbReference type="GO" id="GO:0009228">
    <property type="term" value="P:thiamine biosynthetic process"/>
    <property type="evidence" value="ECO:0007669"/>
    <property type="project" value="UniProtKB-KW"/>
</dbReference>
<dbReference type="GO" id="GO:0009229">
    <property type="term" value="P:thiamine diphosphate biosynthetic process"/>
    <property type="evidence" value="ECO:0007669"/>
    <property type="project" value="UniProtKB-UniRule"/>
</dbReference>
<dbReference type="CDD" id="cd00564">
    <property type="entry name" value="TMP_TenI"/>
    <property type="match status" value="1"/>
</dbReference>
<dbReference type="FunFam" id="3.20.20.70:FF:000064">
    <property type="entry name" value="Thiamine-phosphate synthase"/>
    <property type="match status" value="1"/>
</dbReference>
<dbReference type="Gene3D" id="3.20.20.70">
    <property type="entry name" value="Aldolase class I"/>
    <property type="match status" value="1"/>
</dbReference>
<dbReference type="HAMAP" id="MF_00097">
    <property type="entry name" value="TMP_synthase"/>
    <property type="match status" value="1"/>
</dbReference>
<dbReference type="InterPro" id="IPR013785">
    <property type="entry name" value="Aldolase_TIM"/>
</dbReference>
<dbReference type="InterPro" id="IPR036206">
    <property type="entry name" value="ThiamineP_synth_sf"/>
</dbReference>
<dbReference type="InterPro" id="IPR022998">
    <property type="entry name" value="ThiamineP_synth_TenI"/>
</dbReference>
<dbReference type="InterPro" id="IPR034291">
    <property type="entry name" value="TMP_synthase"/>
</dbReference>
<dbReference type="NCBIfam" id="NF002904">
    <property type="entry name" value="PRK03512.1"/>
    <property type="match status" value="1"/>
</dbReference>
<dbReference type="NCBIfam" id="TIGR00693">
    <property type="entry name" value="thiE"/>
    <property type="match status" value="1"/>
</dbReference>
<dbReference type="PANTHER" id="PTHR20857">
    <property type="entry name" value="THIAMINE-PHOSPHATE PYROPHOSPHORYLASE"/>
    <property type="match status" value="1"/>
</dbReference>
<dbReference type="PANTHER" id="PTHR20857:SF15">
    <property type="entry name" value="THIAMINE-PHOSPHATE SYNTHASE"/>
    <property type="match status" value="1"/>
</dbReference>
<dbReference type="Pfam" id="PF02581">
    <property type="entry name" value="TMP-TENI"/>
    <property type="match status" value="1"/>
</dbReference>
<dbReference type="SUPFAM" id="SSF51391">
    <property type="entry name" value="Thiamin phosphate synthase"/>
    <property type="match status" value="1"/>
</dbReference>
<comment type="function">
    <text evidence="1">Condenses 4-methyl-5-(beta-hydroxyethyl)thiazole monophosphate (THZ-P) and 2-methyl-4-amino-5-hydroxymethyl pyrimidine pyrophosphate (HMP-PP) to form thiamine monophosphate (TMP).</text>
</comment>
<comment type="catalytic activity">
    <reaction evidence="1">
        <text>2-[(2R,5Z)-2-carboxy-4-methylthiazol-5(2H)-ylidene]ethyl phosphate + 4-amino-2-methyl-5-(diphosphooxymethyl)pyrimidine + 2 H(+) = thiamine phosphate + CO2 + diphosphate</text>
        <dbReference type="Rhea" id="RHEA:47844"/>
        <dbReference type="ChEBI" id="CHEBI:15378"/>
        <dbReference type="ChEBI" id="CHEBI:16526"/>
        <dbReference type="ChEBI" id="CHEBI:33019"/>
        <dbReference type="ChEBI" id="CHEBI:37575"/>
        <dbReference type="ChEBI" id="CHEBI:57841"/>
        <dbReference type="ChEBI" id="CHEBI:62899"/>
        <dbReference type="EC" id="2.5.1.3"/>
    </reaction>
</comment>
<comment type="catalytic activity">
    <reaction evidence="1">
        <text>2-(2-carboxy-4-methylthiazol-5-yl)ethyl phosphate + 4-amino-2-methyl-5-(diphosphooxymethyl)pyrimidine + 2 H(+) = thiamine phosphate + CO2 + diphosphate</text>
        <dbReference type="Rhea" id="RHEA:47848"/>
        <dbReference type="ChEBI" id="CHEBI:15378"/>
        <dbReference type="ChEBI" id="CHEBI:16526"/>
        <dbReference type="ChEBI" id="CHEBI:33019"/>
        <dbReference type="ChEBI" id="CHEBI:37575"/>
        <dbReference type="ChEBI" id="CHEBI:57841"/>
        <dbReference type="ChEBI" id="CHEBI:62890"/>
        <dbReference type="EC" id="2.5.1.3"/>
    </reaction>
</comment>
<comment type="catalytic activity">
    <reaction evidence="1">
        <text>4-methyl-5-(2-phosphooxyethyl)-thiazole + 4-amino-2-methyl-5-(diphosphooxymethyl)pyrimidine + H(+) = thiamine phosphate + diphosphate</text>
        <dbReference type="Rhea" id="RHEA:22328"/>
        <dbReference type="ChEBI" id="CHEBI:15378"/>
        <dbReference type="ChEBI" id="CHEBI:33019"/>
        <dbReference type="ChEBI" id="CHEBI:37575"/>
        <dbReference type="ChEBI" id="CHEBI:57841"/>
        <dbReference type="ChEBI" id="CHEBI:58296"/>
        <dbReference type="EC" id="2.5.1.3"/>
    </reaction>
</comment>
<comment type="cofactor">
    <cofactor evidence="1">
        <name>Mg(2+)</name>
        <dbReference type="ChEBI" id="CHEBI:18420"/>
    </cofactor>
    <text evidence="1">Binds 1 Mg(2+) ion per subunit.</text>
</comment>
<comment type="pathway">
    <text evidence="1">Cofactor biosynthesis; thiamine diphosphate biosynthesis; thiamine phosphate from 4-amino-2-methyl-5-diphosphomethylpyrimidine and 4-methyl-5-(2-phosphoethyl)-thiazole: step 1/1.</text>
</comment>
<comment type="similarity">
    <text evidence="1">Belongs to the thiamine-phosphate synthase family.</text>
</comment>
<organism>
    <name type="scientific">Escherichia coli O157:H7</name>
    <dbReference type="NCBI Taxonomy" id="83334"/>
    <lineage>
        <taxon>Bacteria</taxon>
        <taxon>Pseudomonadati</taxon>
        <taxon>Pseudomonadota</taxon>
        <taxon>Gammaproteobacteria</taxon>
        <taxon>Enterobacterales</taxon>
        <taxon>Enterobacteriaceae</taxon>
        <taxon>Escherichia</taxon>
    </lineage>
</organism>
<protein>
    <recommendedName>
        <fullName evidence="1">Thiamine-phosphate synthase</fullName>
        <shortName evidence="1">TP synthase</shortName>
        <shortName evidence="1">TPS</shortName>
        <ecNumber evidence="1">2.5.1.3</ecNumber>
    </recommendedName>
    <alternativeName>
        <fullName evidence="1">Thiamine-phosphate pyrophosphorylase</fullName>
        <shortName evidence="1">TMP pyrophosphorylase</shortName>
        <shortName evidence="1">TMP-PPase</shortName>
    </alternativeName>
</protein>
<sequence>MYQPDFPPVPFRLGLYPVVDSVQWIERLLDAGVRTLQLRIKDRRDEEVEADVVAAIALGRRYNARLFINDYWRLAIKHQAYGVHLGQEDLQATDLNAIRAAGLRLGVSTHDDMEIDVALAARPSYIALGHVFPTQTKQMPSAPQGLEQLARHVERLSDYPTVAIGGISLARAPAVIATGVGSIAVVSAITQAADWRLATAQLLEIAGVGDE</sequence>
<name>THIE_ECO57</name>
<accession>Q8X6Y0</accession>
<evidence type="ECO:0000255" key="1">
    <source>
        <dbReference type="HAMAP-Rule" id="MF_00097"/>
    </source>
</evidence>